<evidence type="ECO:0000255" key="1">
    <source>
        <dbReference type="HAMAP-Rule" id="MF_00392"/>
    </source>
</evidence>
<dbReference type="EC" id="2.4.1.182" evidence="1"/>
<dbReference type="EMBL" id="CR543861">
    <property type="protein sequence ID" value="CAG69106.1"/>
    <property type="molecule type" value="Genomic_DNA"/>
</dbReference>
<dbReference type="SMR" id="Q6FA07"/>
<dbReference type="STRING" id="202950.GCA_001485005_00080"/>
<dbReference type="CAZy" id="GT19">
    <property type="family name" value="Glycosyltransferase Family 19"/>
</dbReference>
<dbReference type="KEGG" id="aci:ACIAD2324"/>
<dbReference type="eggNOG" id="COG0763">
    <property type="taxonomic scope" value="Bacteria"/>
</dbReference>
<dbReference type="HOGENOM" id="CLU_036577_3_0_6"/>
<dbReference type="UniPathway" id="UPA00973"/>
<dbReference type="Proteomes" id="UP000000430">
    <property type="component" value="Chromosome"/>
</dbReference>
<dbReference type="GO" id="GO:0016020">
    <property type="term" value="C:membrane"/>
    <property type="evidence" value="ECO:0007669"/>
    <property type="project" value="GOC"/>
</dbReference>
<dbReference type="GO" id="GO:0008915">
    <property type="term" value="F:lipid-A-disaccharide synthase activity"/>
    <property type="evidence" value="ECO:0007669"/>
    <property type="project" value="UniProtKB-UniRule"/>
</dbReference>
<dbReference type="GO" id="GO:0005543">
    <property type="term" value="F:phospholipid binding"/>
    <property type="evidence" value="ECO:0007669"/>
    <property type="project" value="TreeGrafter"/>
</dbReference>
<dbReference type="GO" id="GO:0009245">
    <property type="term" value="P:lipid A biosynthetic process"/>
    <property type="evidence" value="ECO:0007669"/>
    <property type="project" value="UniProtKB-UniRule"/>
</dbReference>
<dbReference type="Gene3D" id="3.40.50.2000">
    <property type="entry name" value="Glycogen Phosphorylase B"/>
    <property type="match status" value="1"/>
</dbReference>
<dbReference type="HAMAP" id="MF_00392">
    <property type="entry name" value="LpxB"/>
    <property type="match status" value="1"/>
</dbReference>
<dbReference type="InterPro" id="IPR003835">
    <property type="entry name" value="Glyco_trans_19"/>
</dbReference>
<dbReference type="NCBIfam" id="TIGR00215">
    <property type="entry name" value="lpxB"/>
    <property type="match status" value="1"/>
</dbReference>
<dbReference type="PANTHER" id="PTHR30372">
    <property type="entry name" value="LIPID-A-DISACCHARIDE SYNTHASE"/>
    <property type="match status" value="1"/>
</dbReference>
<dbReference type="PANTHER" id="PTHR30372:SF4">
    <property type="entry name" value="LIPID-A-DISACCHARIDE SYNTHASE, MITOCHONDRIAL-RELATED"/>
    <property type="match status" value="1"/>
</dbReference>
<dbReference type="Pfam" id="PF02684">
    <property type="entry name" value="LpxB"/>
    <property type="match status" value="1"/>
</dbReference>
<dbReference type="SUPFAM" id="SSF53756">
    <property type="entry name" value="UDP-Glycosyltransferase/glycogen phosphorylase"/>
    <property type="match status" value="1"/>
</dbReference>
<protein>
    <recommendedName>
        <fullName evidence="1">Lipid-A-disaccharide synthase</fullName>
        <ecNumber evidence="1">2.4.1.182</ecNumber>
    </recommendedName>
</protein>
<sequence>MYGTCHLSTHKLKIGIVVGEVSGDTLGVQLMRSFREQGIDAEFEGIGGPQMIAEGFNSFYPMETLSVMGIVEVLKDIKKLFAVRDGLVQRWREHPVDVFVGIDAPDFNLRLSKSLKEKNLPIRTVQYVSPSVWAWRQGRVKGIKATIDLVLCLFPFEKNFYEQHSVRAAFVGHPLAKLLPLNNSLVEAKQALGLNPEKTYIALLPGSRKGEVERLLPMLLGSAEILLKKYPDVEYLIPAISDVRKKQIQDGIQSIAPQYAQKLHVLENQDQESKIGRQVMNASDIVALASGTATLEAMLLHRPMVSFYKLNTLTYIIAKLLVKIQYYSLPNIIAGKKVIEELIQKDANPERLAHEIEKLMNNETAKIQMMQHFSMHKQLISGNTEDPVQAIMTLIQ</sequence>
<name>LPXB_ACIAD</name>
<reference key="1">
    <citation type="journal article" date="2004" name="Nucleic Acids Res.">
        <title>Unique features revealed by the genome sequence of Acinetobacter sp. ADP1, a versatile and naturally transformation competent bacterium.</title>
        <authorList>
            <person name="Barbe V."/>
            <person name="Vallenet D."/>
            <person name="Fonknechten N."/>
            <person name="Kreimeyer A."/>
            <person name="Oztas S."/>
            <person name="Labarre L."/>
            <person name="Cruveiller S."/>
            <person name="Robert C."/>
            <person name="Duprat S."/>
            <person name="Wincker P."/>
            <person name="Ornston L.N."/>
            <person name="Weissenbach J."/>
            <person name="Marliere P."/>
            <person name="Cohen G.N."/>
            <person name="Medigue C."/>
        </authorList>
    </citation>
    <scope>NUCLEOTIDE SEQUENCE [LARGE SCALE GENOMIC DNA]</scope>
    <source>
        <strain>ATCC 33305 / BD413 / ADP1</strain>
    </source>
</reference>
<organism>
    <name type="scientific">Acinetobacter baylyi (strain ATCC 33305 / BD413 / ADP1)</name>
    <dbReference type="NCBI Taxonomy" id="62977"/>
    <lineage>
        <taxon>Bacteria</taxon>
        <taxon>Pseudomonadati</taxon>
        <taxon>Pseudomonadota</taxon>
        <taxon>Gammaproteobacteria</taxon>
        <taxon>Moraxellales</taxon>
        <taxon>Moraxellaceae</taxon>
        <taxon>Acinetobacter</taxon>
    </lineage>
</organism>
<proteinExistence type="inferred from homology"/>
<accession>Q6FA07</accession>
<keyword id="KW-0328">Glycosyltransferase</keyword>
<keyword id="KW-0441">Lipid A biosynthesis</keyword>
<keyword id="KW-0444">Lipid biosynthesis</keyword>
<keyword id="KW-0443">Lipid metabolism</keyword>
<keyword id="KW-0808">Transferase</keyword>
<comment type="function">
    <text evidence="1">Condensation of UDP-2,3-diacylglucosamine and 2,3-diacylglucosamine-1-phosphate to form lipid A disaccharide, a precursor of lipid A, a phosphorylated glycolipid that anchors the lipopolysaccharide to the outer membrane of the cell.</text>
</comment>
<comment type="catalytic activity">
    <reaction evidence="1">
        <text>a lipid X + a UDP-2-N,3-O-bis[(3R)-3-hydroxyacyl]-alpha-D-glucosamine = a lipid A disaccharide + UDP + H(+)</text>
        <dbReference type="Rhea" id="RHEA:67828"/>
        <dbReference type="ChEBI" id="CHEBI:15378"/>
        <dbReference type="ChEBI" id="CHEBI:58223"/>
        <dbReference type="ChEBI" id="CHEBI:137748"/>
        <dbReference type="ChEBI" id="CHEBI:176338"/>
        <dbReference type="ChEBI" id="CHEBI:176343"/>
        <dbReference type="EC" id="2.4.1.182"/>
    </reaction>
</comment>
<comment type="pathway">
    <text evidence="1">Bacterial outer membrane biogenesis; LPS lipid A biosynthesis.</text>
</comment>
<comment type="similarity">
    <text evidence="1">Belongs to the LpxB family.</text>
</comment>
<feature type="chain" id="PRO_0000255157" description="Lipid-A-disaccharide synthase">
    <location>
        <begin position="1"/>
        <end position="396"/>
    </location>
</feature>
<gene>
    <name evidence="1" type="primary">lpxB</name>
    <name type="ordered locus">ACIAD2324</name>
</gene>